<reference key="1">
    <citation type="journal article" date="2001" name="Proc. Natl. Acad. Sci. U.S.A.">
        <title>Complete genome sequence of Caulobacter crescentus.</title>
        <authorList>
            <person name="Nierman W.C."/>
            <person name="Feldblyum T.V."/>
            <person name="Laub M.T."/>
            <person name="Paulsen I.T."/>
            <person name="Nelson K.E."/>
            <person name="Eisen J.A."/>
            <person name="Heidelberg J.F."/>
            <person name="Alley M.R.K."/>
            <person name="Ohta N."/>
            <person name="Maddock J.R."/>
            <person name="Potocka I."/>
            <person name="Nelson W.C."/>
            <person name="Newton A."/>
            <person name="Stephens C."/>
            <person name="Phadke N.D."/>
            <person name="Ely B."/>
            <person name="DeBoy R.T."/>
            <person name="Dodson R.J."/>
            <person name="Durkin A.S."/>
            <person name="Gwinn M.L."/>
            <person name="Haft D.H."/>
            <person name="Kolonay J.F."/>
            <person name="Smit J."/>
            <person name="Craven M.B."/>
            <person name="Khouri H.M."/>
            <person name="Shetty J."/>
            <person name="Berry K.J."/>
            <person name="Utterback T.R."/>
            <person name="Tran K."/>
            <person name="Wolf A.M."/>
            <person name="Vamathevan J.J."/>
            <person name="Ermolaeva M.D."/>
            <person name="White O."/>
            <person name="Salzberg S.L."/>
            <person name="Venter J.C."/>
            <person name="Shapiro L."/>
            <person name="Fraser C.M."/>
        </authorList>
    </citation>
    <scope>NUCLEOTIDE SEQUENCE [LARGE SCALE GENOMIC DNA]</scope>
    <source>
        <strain>ATCC 19089 / CIP 103742 / CB 15</strain>
    </source>
</reference>
<keyword id="KW-0963">Cytoplasm</keyword>
<keyword id="KW-0489">Methyltransferase</keyword>
<keyword id="KW-1185">Reference proteome</keyword>
<keyword id="KW-0949">S-adenosyl-L-methionine</keyword>
<keyword id="KW-0808">Transferase</keyword>
<keyword id="KW-0819">tRNA processing</keyword>
<protein>
    <recommendedName>
        <fullName>tRNA (guanine-N(1)-)-methyltransferase</fullName>
        <ecNumber>2.1.1.228</ecNumber>
    </recommendedName>
    <alternativeName>
        <fullName>M1G-methyltransferase</fullName>
    </alternativeName>
    <alternativeName>
        <fullName>tRNA [GM37] methyltransferase</fullName>
    </alternativeName>
</protein>
<dbReference type="EC" id="2.1.1.228"/>
<dbReference type="EMBL" id="AE005673">
    <property type="protein sequence ID" value="AAK22185.1"/>
    <property type="molecule type" value="Genomic_DNA"/>
</dbReference>
<dbReference type="PIR" id="E87273">
    <property type="entry name" value="E87273"/>
</dbReference>
<dbReference type="RefSeq" id="NP_419017.1">
    <property type="nucleotide sequence ID" value="NC_002696.2"/>
</dbReference>
<dbReference type="RefSeq" id="WP_010918087.1">
    <property type="nucleotide sequence ID" value="NC_002696.2"/>
</dbReference>
<dbReference type="SMR" id="Q9ABM9"/>
<dbReference type="STRING" id="190650.CC_0198"/>
<dbReference type="EnsemblBacteria" id="AAK22185">
    <property type="protein sequence ID" value="AAK22185"/>
    <property type="gene ID" value="CC_0198"/>
</dbReference>
<dbReference type="KEGG" id="ccr:CC_0198"/>
<dbReference type="PATRIC" id="fig|190650.5.peg.195"/>
<dbReference type="eggNOG" id="COG0336">
    <property type="taxonomic scope" value="Bacteria"/>
</dbReference>
<dbReference type="HOGENOM" id="CLU_047363_0_1_5"/>
<dbReference type="BioCyc" id="CAULO:CC0198-MONOMER"/>
<dbReference type="Proteomes" id="UP000001816">
    <property type="component" value="Chromosome"/>
</dbReference>
<dbReference type="GO" id="GO:0005829">
    <property type="term" value="C:cytosol"/>
    <property type="evidence" value="ECO:0007669"/>
    <property type="project" value="TreeGrafter"/>
</dbReference>
<dbReference type="GO" id="GO:0052906">
    <property type="term" value="F:tRNA (guanine(37)-N1)-methyltransferase activity"/>
    <property type="evidence" value="ECO:0007669"/>
    <property type="project" value="UniProtKB-UniRule"/>
</dbReference>
<dbReference type="GO" id="GO:0002939">
    <property type="term" value="P:tRNA N1-guanine methylation"/>
    <property type="evidence" value="ECO:0007669"/>
    <property type="project" value="TreeGrafter"/>
</dbReference>
<dbReference type="CDD" id="cd18080">
    <property type="entry name" value="TrmD-like"/>
    <property type="match status" value="1"/>
</dbReference>
<dbReference type="Gene3D" id="3.40.1280.10">
    <property type="match status" value="1"/>
</dbReference>
<dbReference type="Gene3D" id="1.10.1270.20">
    <property type="entry name" value="tRNA(m1g37)methyltransferase, domain 2"/>
    <property type="match status" value="1"/>
</dbReference>
<dbReference type="HAMAP" id="MF_00605">
    <property type="entry name" value="TrmD"/>
    <property type="match status" value="1"/>
</dbReference>
<dbReference type="InterPro" id="IPR029028">
    <property type="entry name" value="Alpha/beta_knot_MTases"/>
</dbReference>
<dbReference type="InterPro" id="IPR023148">
    <property type="entry name" value="tRNA_m1G_MeTrfase_C_sf"/>
</dbReference>
<dbReference type="InterPro" id="IPR002649">
    <property type="entry name" value="tRNA_m1G_MeTrfase_TrmD"/>
</dbReference>
<dbReference type="InterPro" id="IPR029026">
    <property type="entry name" value="tRNA_m1G_MTases_N"/>
</dbReference>
<dbReference type="InterPro" id="IPR016009">
    <property type="entry name" value="tRNA_MeTrfase_TRMD/TRM10"/>
</dbReference>
<dbReference type="NCBIfam" id="NF000648">
    <property type="entry name" value="PRK00026.1"/>
    <property type="match status" value="1"/>
</dbReference>
<dbReference type="NCBIfam" id="TIGR00088">
    <property type="entry name" value="trmD"/>
    <property type="match status" value="1"/>
</dbReference>
<dbReference type="PANTHER" id="PTHR46417">
    <property type="entry name" value="TRNA (GUANINE-N(1)-)-METHYLTRANSFERASE"/>
    <property type="match status" value="1"/>
</dbReference>
<dbReference type="PANTHER" id="PTHR46417:SF1">
    <property type="entry name" value="TRNA (GUANINE-N(1)-)-METHYLTRANSFERASE"/>
    <property type="match status" value="1"/>
</dbReference>
<dbReference type="Pfam" id="PF01746">
    <property type="entry name" value="tRNA_m1G_MT"/>
    <property type="match status" value="1"/>
</dbReference>
<dbReference type="PIRSF" id="PIRSF000386">
    <property type="entry name" value="tRNA_mtase"/>
    <property type="match status" value="1"/>
</dbReference>
<dbReference type="SUPFAM" id="SSF75217">
    <property type="entry name" value="alpha/beta knot"/>
    <property type="match status" value="1"/>
</dbReference>
<comment type="function">
    <text evidence="1">Specifically methylates guanosine-37 in various tRNAs.</text>
</comment>
<comment type="catalytic activity">
    <reaction>
        <text>guanosine(37) in tRNA + S-adenosyl-L-methionine = N(1)-methylguanosine(37) in tRNA + S-adenosyl-L-homocysteine + H(+)</text>
        <dbReference type="Rhea" id="RHEA:36899"/>
        <dbReference type="Rhea" id="RHEA-COMP:10145"/>
        <dbReference type="Rhea" id="RHEA-COMP:10147"/>
        <dbReference type="ChEBI" id="CHEBI:15378"/>
        <dbReference type="ChEBI" id="CHEBI:57856"/>
        <dbReference type="ChEBI" id="CHEBI:59789"/>
        <dbReference type="ChEBI" id="CHEBI:73542"/>
        <dbReference type="ChEBI" id="CHEBI:74269"/>
        <dbReference type="EC" id="2.1.1.228"/>
    </reaction>
</comment>
<comment type="subunit">
    <text evidence="1">Homodimer.</text>
</comment>
<comment type="subcellular location">
    <subcellularLocation>
        <location evidence="3">Cytoplasm</location>
    </subcellularLocation>
</comment>
<comment type="similarity">
    <text evidence="3">Belongs to the RNA methyltransferase TrmD family.</text>
</comment>
<accession>Q9ABM9</accession>
<organism>
    <name type="scientific">Caulobacter vibrioides (strain ATCC 19089 / CIP 103742 / CB 15)</name>
    <name type="common">Caulobacter crescentus</name>
    <dbReference type="NCBI Taxonomy" id="190650"/>
    <lineage>
        <taxon>Bacteria</taxon>
        <taxon>Pseudomonadati</taxon>
        <taxon>Pseudomonadota</taxon>
        <taxon>Alphaproteobacteria</taxon>
        <taxon>Caulobacterales</taxon>
        <taxon>Caulobacteraceae</taxon>
        <taxon>Caulobacter</taxon>
    </lineage>
</organism>
<gene>
    <name type="primary">trmD</name>
    <name type="ordered locus">CC_0198</name>
</gene>
<evidence type="ECO:0000250" key="1"/>
<evidence type="ECO:0000256" key="2">
    <source>
        <dbReference type="SAM" id="MobiDB-lite"/>
    </source>
</evidence>
<evidence type="ECO:0000305" key="3"/>
<feature type="chain" id="PRO_0000060352" description="tRNA (guanine-N(1)-)-methyltransferase">
    <location>
        <begin position="1"/>
        <end position="245"/>
    </location>
</feature>
<feature type="region of interest" description="Disordered" evidence="2">
    <location>
        <begin position="210"/>
        <end position="245"/>
    </location>
</feature>
<feature type="compositionally biased region" description="Basic and acidic residues" evidence="2">
    <location>
        <begin position="210"/>
        <end position="225"/>
    </location>
</feature>
<feature type="compositionally biased region" description="Basic and acidic residues" evidence="2">
    <location>
        <begin position="235"/>
        <end position="245"/>
    </location>
</feature>
<feature type="binding site" evidence="1">
    <location>
        <position position="113"/>
    </location>
    <ligand>
        <name>S-adenosyl-L-methionine</name>
        <dbReference type="ChEBI" id="CHEBI:59789"/>
    </ligand>
</feature>
<name>TRMD_CAUVC</name>
<sequence>MPFTATVLTMFPEAFPGPLGVSMIGTAWKEQDLWRLETLDIRAFSKDKRGFLDDTPAGGGAGAVLKADVIASALDSLERDGRPLLYMSARGRPLTQARVREWSKAPGIVVLCGRFEGVDQRVLDARGFEEVSVGDAVLAGGEAAAMVVIEACVRLAPGVLGNIESTLEESFEDGLLEHPQYTRPRTFEELDIPEVLLSGDHKKIDQWRKRMREETTRERRPDLWEAHLANQQAKGDPKPGKPKET</sequence>
<proteinExistence type="inferred from homology"/>